<feature type="chain" id="PRO_1000144409" description="Large ribosomal subunit protein bL17">
    <location>
        <begin position="1"/>
        <end position="116"/>
    </location>
</feature>
<comment type="subunit">
    <text evidence="1">Part of the 50S ribosomal subunit. Contacts protein L32.</text>
</comment>
<comment type="similarity">
    <text evidence="1">Belongs to the bacterial ribosomal protein bL17 family.</text>
</comment>
<keyword id="KW-1185">Reference proteome</keyword>
<keyword id="KW-0687">Ribonucleoprotein</keyword>
<keyword id="KW-0689">Ribosomal protein</keyword>
<name>RL17_GLOC7</name>
<gene>
    <name evidence="1" type="primary">rplQ</name>
    <name evidence="1" type="synonym">rpl17</name>
    <name type="ordered locus">PCC7424_3728</name>
</gene>
<accession>B7KI12</accession>
<proteinExistence type="inferred from homology"/>
<organism>
    <name type="scientific">Gloeothece citriformis (strain PCC 7424)</name>
    <name type="common">Cyanothece sp. (strain PCC 7424)</name>
    <dbReference type="NCBI Taxonomy" id="65393"/>
    <lineage>
        <taxon>Bacteria</taxon>
        <taxon>Bacillati</taxon>
        <taxon>Cyanobacteriota</taxon>
        <taxon>Cyanophyceae</taxon>
        <taxon>Oscillatoriophycideae</taxon>
        <taxon>Chroococcales</taxon>
        <taxon>Aphanothecaceae</taxon>
        <taxon>Gloeothece</taxon>
        <taxon>Gloeothece citriformis</taxon>
    </lineage>
</organism>
<dbReference type="EMBL" id="CP001291">
    <property type="protein sequence ID" value="ACK72109.1"/>
    <property type="molecule type" value="Genomic_DNA"/>
</dbReference>
<dbReference type="RefSeq" id="WP_015955701.1">
    <property type="nucleotide sequence ID" value="NC_011729.1"/>
</dbReference>
<dbReference type="SMR" id="B7KI12"/>
<dbReference type="STRING" id="65393.PCC7424_3728"/>
<dbReference type="KEGG" id="cyc:PCC7424_3728"/>
<dbReference type="eggNOG" id="COG0203">
    <property type="taxonomic scope" value="Bacteria"/>
</dbReference>
<dbReference type="HOGENOM" id="CLU_074407_2_2_3"/>
<dbReference type="OrthoDB" id="9809073at2"/>
<dbReference type="Proteomes" id="UP000002384">
    <property type="component" value="Chromosome"/>
</dbReference>
<dbReference type="GO" id="GO:0022625">
    <property type="term" value="C:cytosolic large ribosomal subunit"/>
    <property type="evidence" value="ECO:0007669"/>
    <property type="project" value="TreeGrafter"/>
</dbReference>
<dbReference type="GO" id="GO:0003735">
    <property type="term" value="F:structural constituent of ribosome"/>
    <property type="evidence" value="ECO:0007669"/>
    <property type="project" value="InterPro"/>
</dbReference>
<dbReference type="GO" id="GO:0006412">
    <property type="term" value="P:translation"/>
    <property type="evidence" value="ECO:0007669"/>
    <property type="project" value="UniProtKB-UniRule"/>
</dbReference>
<dbReference type="FunFam" id="3.90.1030.10:FF:000001">
    <property type="entry name" value="50S ribosomal protein L17"/>
    <property type="match status" value="1"/>
</dbReference>
<dbReference type="Gene3D" id="3.90.1030.10">
    <property type="entry name" value="Ribosomal protein L17"/>
    <property type="match status" value="1"/>
</dbReference>
<dbReference type="HAMAP" id="MF_01368">
    <property type="entry name" value="Ribosomal_bL17"/>
    <property type="match status" value="1"/>
</dbReference>
<dbReference type="InterPro" id="IPR000456">
    <property type="entry name" value="Ribosomal_bL17"/>
</dbReference>
<dbReference type="InterPro" id="IPR047859">
    <property type="entry name" value="Ribosomal_bL17_CS"/>
</dbReference>
<dbReference type="InterPro" id="IPR036373">
    <property type="entry name" value="Ribosomal_bL17_sf"/>
</dbReference>
<dbReference type="NCBIfam" id="TIGR00059">
    <property type="entry name" value="L17"/>
    <property type="match status" value="1"/>
</dbReference>
<dbReference type="PANTHER" id="PTHR14413:SF16">
    <property type="entry name" value="LARGE RIBOSOMAL SUBUNIT PROTEIN BL17M"/>
    <property type="match status" value="1"/>
</dbReference>
<dbReference type="PANTHER" id="PTHR14413">
    <property type="entry name" value="RIBOSOMAL PROTEIN L17"/>
    <property type="match status" value="1"/>
</dbReference>
<dbReference type="Pfam" id="PF01196">
    <property type="entry name" value="Ribosomal_L17"/>
    <property type="match status" value="1"/>
</dbReference>
<dbReference type="SUPFAM" id="SSF64263">
    <property type="entry name" value="Prokaryotic ribosomal protein L17"/>
    <property type="match status" value="1"/>
</dbReference>
<dbReference type="PROSITE" id="PS01167">
    <property type="entry name" value="RIBOSOMAL_L17"/>
    <property type="match status" value="1"/>
</dbReference>
<reference key="1">
    <citation type="journal article" date="2011" name="MBio">
        <title>Novel metabolic attributes of the genus Cyanothece, comprising a group of unicellular nitrogen-fixing Cyanobacteria.</title>
        <authorList>
            <person name="Bandyopadhyay A."/>
            <person name="Elvitigala T."/>
            <person name="Welsh E."/>
            <person name="Stockel J."/>
            <person name="Liberton M."/>
            <person name="Min H."/>
            <person name="Sherman L.A."/>
            <person name="Pakrasi H.B."/>
        </authorList>
    </citation>
    <scope>NUCLEOTIDE SEQUENCE [LARGE SCALE GENOMIC DNA]</scope>
    <source>
        <strain>PCC 7424</strain>
    </source>
</reference>
<evidence type="ECO:0000255" key="1">
    <source>
        <dbReference type="HAMAP-Rule" id="MF_01368"/>
    </source>
</evidence>
<evidence type="ECO:0000305" key="2"/>
<protein>
    <recommendedName>
        <fullName evidence="1">Large ribosomal subunit protein bL17</fullName>
    </recommendedName>
    <alternativeName>
        <fullName evidence="2">50S ribosomal protein L17</fullName>
    </alternativeName>
</protein>
<sequence>MRHRCRVPQLGRPADQRKALLRALTTELIRHGQITTTLTRAKAVRSQADKMITLAKDGSLAARRQAMGYIYDKQLVHRLFDQAQERYSNRNGGYTRVVRTLRRRGDNAEMAIIELV</sequence>